<evidence type="ECO:0000250" key="1"/>
<evidence type="ECO:0000255" key="2">
    <source>
        <dbReference type="PROSITE-ProRule" id="PRU00176"/>
    </source>
</evidence>
<evidence type="ECO:0000256" key="3">
    <source>
        <dbReference type="SAM" id="MobiDB-lite"/>
    </source>
</evidence>
<evidence type="ECO:0000305" key="4"/>
<protein>
    <recommendedName>
        <fullName>Multiple RNA-binding domain-containing protein 1</fullName>
    </recommendedName>
</protein>
<feature type="chain" id="PRO_0000081642" description="Multiple RNA-binding domain-containing protein 1">
    <location>
        <begin position="1"/>
        <end position="878"/>
    </location>
</feature>
<feature type="domain" description="RRM 1" evidence="2">
    <location>
        <begin position="2"/>
        <end position="90"/>
    </location>
</feature>
<feature type="domain" description="RRM 2" evidence="2">
    <location>
        <begin position="330"/>
        <end position="408"/>
    </location>
</feature>
<feature type="domain" description="RRM 3" evidence="2">
    <location>
        <begin position="516"/>
        <end position="588"/>
    </location>
</feature>
<feature type="domain" description="RRM 4" evidence="2">
    <location>
        <begin position="651"/>
        <end position="734"/>
    </location>
</feature>
<feature type="domain" description="RRM 5" evidence="2">
    <location>
        <begin position="752"/>
        <end position="829"/>
    </location>
</feature>
<feature type="region of interest" description="Disordered" evidence="3">
    <location>
        <begin position="118"/>
        <end position="143"/>
    </location>
</feature>
<feature type="region of interest" description="Disordered" evidence="3">
    <location>
        <begin position="159"/>
        <end position="269"/>
    </location>
</feature>
<feature type="region of interest" description="Disordered" evidence="3">
    <location>
        <begin position="287"/>
        <end position="323"/>
    </location>
</feature>
<feature type="region of interest" description="Disordered" evidence="3">
    <location>
        <begin position="732"/>
        <end position="751"/>
    </location>
</feature>
<feature type="region of interest" description="Disordered" evidence="3">
    <location>
        <begin position="852"/>
        <end position="878"/>
    </location>
</feature>
<feature type="compositionally biased region" description="Polar residues" evidence="3">
    <location>
        <begin position="159"/>
        <end position="177"/>
    </location>
</feature>
<feature type="compositionally biased region" description="Acidic residues" evidence="3">
    <location>
        <begin position="180"/>
        <end position="190"/>
    </location>
</feature>
<feature type="compositionally biased region" description="Low complexity" evidence="3">
    <location>
        <begin position="295"/>
        <end position="304"/>
    </location>
</feature>
<feature type="compositionally biased region" description="Acidic residues" evidence="3">
    <location>
        <begin position="305"/>
        <end position="319"/>
    </location>
</feature>
<feature type="compositionally biased region" description="Acidic residues" evidence="3">
    <location>
        <begin position="867"/>
        <end position="878"/>
    </location>
</feature>
<reference key="1">
    <citation type="journal article" date="2004" name="Nature">
        <title>Genome evolution in yeasts.</title>
        <authorList>
            <person name="Dujon B."/>
            <person name="Sherman D."/>
            <person name="Fischer G."/>
            <person name="Durrens P."/>
            <person name="Casaregola S."/>
            <person name="Lafontaine I."/>
            <person name="de Montigny J."/>
            <person name="Marck C."/>
            <person name="Neuveglise C."/>
            <person name="Talla E."/>
            <person name="Goffard N."/>
            <person name="Frangeul L."/>
            <person name="Aigle M."/>
            <person name="Anthouard V."/>
            <person name="Babour A."/>
            <person name="Barbe V."/>
            <person name="Barnay S."/>
            <person name="Blanchin S."/>
            <person name="Beckerich J.-M."/>
            <person name="Beyne E."/>
            <person name="Bleykasten C."/>
            <person name="Boisrame A."/>
            <person name="Boyer J."/>
            <person name="Cattolico L."/>
            <person name="Confanioleri F."/>
            <person name="de Daruvar A."/>
            <person name="Despons L."/>
            <person name="Fabre E."/>
            <person name="Fairhead C."/>
            <person name="Ferry-Dumazet H."/>
            <person name="Groppi A."/>
            <person name="Hantraye F."/>
            <person name="Hennequin C."/>
            <person name="Jauniaux N."/>
            <person name="Joyet P."/>
            <person name="Kachouri R."/>
            <person name="Kerrest A."/>
            <person name="Koszul R."/>
            <person name="Lemaire M."/>
            <person name="Lesur I."/>
            <person name="Ma L."/>
            <person name="Muller H."/>
            <person name="Nicaud J.-M."/>
            <person name="Nikolski M."/>
            <person name="Oztas S."/>
            <person name="Ozier-Kalogeropoulos O."/>
            <person name="Pellenz S."/>
            <person name="Potier S."/>
            <person name="Richard G.-F."/>
            <person name="Straub M.-L."/>
            <person name="Suleau A."/>
            <person name="Swennen D."/>
            <person name="Tekaia F."/>
            <person name="Wesolowski-Louvel M."/>
            <person name="Westhof E."/>
            <person name="Wirth B."/>
            <person name="Zeniou-Meyer M."/>
            <person name="Zivanovic Y."/>
            <person name="Bolotin-Fukuhara M."/>
            <person name="Thierry A."/>
            <person name="Bouchier C."/>
            <person name="Caudron B."/>
            <person name="Scarpelli C."/>
            <person name="Gaillardin C."/>
            <person name="Weissenbach J."/>
            <person name="Wincker P."/>
            <person name="Souciet J.-L."/>
        </authorList>
    </citation>
    <scope>NUCLEOTIDE SEQUENCE [LARGE SCALE GENOMIC DNA]</scope>
    <source>
        <strain>ATCC 8585 / CBS 2359 / DSM 70799 / NBRC 1267 / NRRL Y-1140 / WM37</strain>
    </source>
</reference>
<proteinExistence type="inferred from homology"/>
<keyword id="KW-0539">Nucleus</keyword>
<keyword id="KW-1185">Reference proteome</keyword>
<keyword id="KW-0677">Repeat</keyword>
<keyword id="KW-0687">Ribonucleoprotein</keyword>
<keyword id="KW-0694">RNA-binding</keyword>
<keyword id="KW-0698">rRNA processing</keyword>
<gene>
    <name type="primary">MRD1</name>
    <name type="ordered locus">KLLA0D14949g</name>
</gene>
<dbReference type="EMBL" id="CR382124">
    <property type="protein sequence ID" value="CAH00819.1"/>
    <property type="molecule type" value="Genomic_DNA"/>
</dbReference>
<dbReference type="RefSeq" id="XP_453723.1">
    <property type="nucleotide sequence ID" value="XM_453723.1"/>
</dbReference>
<dbReference type="SMR" id="Q6CQR6"/>
<dbReference type="FunCoup" id="Q6CQR6">
    <property type="interactions" value="1248"/>
</dbReference>
<dbReference type="STRING" id="284590.Q6CQR6"/>
<dbReference type="PaxDb" id="284590-Q6CQR6"/>
<dbReference type="KEGG" id="kla:KLLA0_D14949g"/>
<dbReference type="eggNOG" id="KOG0110">
    <property type="taxonomic scope" value="Eukaryota"/>
</dbReference>
<dbReference type="HOGENOM" id="CLU_008479_0_0_1"/>
<dbReference type="InParanoid" id="Q6CQR6"/>
<dbReference type="OMA" id="THFMGRR"/>
<dbReference type="Proteomes" id="UP000000598">
    <property type="component" value="Chromosome D"/>
</dbReference>
<dbReference type="GO" id="GO:0005634">
    <property type="term" value="C:nucleus"/>
    <property type="evidence" value="ECO:0007669"/>
    <property type="project" value="UniProtKB-SubCell"/>
</dbReference>
<dbReference type="GO" id="GO:1990904">
    <property type="term" value="C:ribonucleoprotein complex"/>
    <property type="evidence" value="ECO:0007669"/>
    <property type="project" value="UniProtKB-KW"/>
</dbReference>
<dbReference type="GO" id="GO:0003729">
    <property type="term" value="F:mRNA binding"/>
    <property type="evidence" value="ECO:0007669"/>
    <property type="project" value="TreeGrafter"/>
</dbReference>
<dbReference type="GO" id="GO:0006364">
    <property type="term" value="P:rRNA processing"/>
    <property type="evidence" value="ECO:0007669"/>
    <property type="project" value="UniProtKB-KW"/>
</dbReference>
<dbReference type="CDD" id="cd12565">
    <property type="entry name" value="RRM1_MRD1"/>
    <property type="match status" value="1"/>
</dbReference>
<dbReference type="CDD" id="cd12568">
    <property type="entry name" value="RRM3_MRD1"/>
    <property type="match status" value="1"/>
</dbReference>
<dbReference type="CDD" id="cd12570">
    <property type="entry name" value="RRM5_MRD1"/>
    <property type="match status" value="1"/>
</dbReference>
<dbReference type="FunFam" id="3.30.70.330:FF:000247">
    <property type="entry name" value="Multiple RNA-binding domain-containing protein 1"/>
    <property type="match status" value="1"/>
</dbReference>
<dbReference type="FunFam" id="3.30.70.330:FF:000459">
    <property type="entry name" value="Multiple RNA-binding domain-containing protein 1"/>
    <property type="match status" value="1"/>
</dbReference>
<dbReference type="FunFam" id="3.30.70.330:FF:000706">
    <property type="entry name" value="Multiple RNA-binding domain-containing protein 1"/>
    <property type="match status" value="1"/>
</dbReference>
<dbReference type="Gene3D" id="3.30.70.330">
    <property type="match status" value="5"/>
</dbReference>
<dbReference type="InterPro" id="IPR034482">
    <property type="entry name" value="Mrd1_RRM3"/>
</dbReference>
<dbReference type="InterPro" id="IPR012677">
    <property type="entry name" value="Nucleotide-bd_a/b_plait_sf"/>
</dbReference>
<dbReference type="InterPro" id="IPR035979">
    <property type="entry name" value="RBD_domain_sf"/>
</dbReference>
<dbReference type="InterPro" id="IPR000504">
    <property type="entry name" value="RRM_dom"/>
</dbReference>
<dbReference type="InterPro" id="IPR051945">
    <property type="entry name" value="RRM_MRD1_RNA_proc_ribogen"/>
</dbReference>
<dbReference type="PANTHER" id="PTHR48039">
    <property type="entry name" value="RNA-BINDING MOTIF PROTEIN 14B"/>
    <property type="match status" value="1"/>
</dbReference>
<dbReference type="PANTHER" id="PTHR48039:SF5">
    <property type="entry name" value="RNA-BINDING PROTEIN 28"/>
    <property type="match status" value="1"/>
</dbReference>
<dbReference type="Pfam" id="PF00076">
    <property type="entry name" value="RRM_1"/>
    <property type="match status" value="5"/>
</dbReference>
<dbReference type="SMART" id="SM00360">
    <property type="entry name" value="RRM"/>
    <property type="match status" value="5"/>
</dbReference>
<dbReference type="SUPFAM" id="SSF54928">
    <property type="entry name" value="RNA-binding domain, RBD"/>
    <property type="match status" value="4"/>
</dbReference>
<dbReference type="PROSITE" id="PS50102">
    <property type="entry name" value="RRM"/>
    <property type="match status" value="5"/>
</dbReference>
<organism>
    <name type="scientific">Kluyveromyces lactis (strain ATCC 8585 / CBS 2359 / DSM 70799 / NBRC 1267 / NRRL Y-1140 / WM37)</name>
    <name type="common">Yeast</name>
    <name type="synonym">Candida sphaerica</name>
    <dbReference type="NCBI Taxonomy" id="284590"/>
    <lineage>
        <taxon>Eukaryota</taxon>
        <taxon>Fungi</taxon>
        <taxon>Dikarya</taxon>
        <taxon>Ascomycota</taxon>
        <taxon>Saccharomycotina</taxon>
        <taxon>Saccharomycetes</taxon>
        <taxon>Saccharomycetales</taxon>
        <taxon>Saccharomycetaceae</taxon>
        <taxon>Kluyveromyces</taxon>
    </lineage>
</organism>
<sequence length="878" mass="99011">MSRVIVKGLPIYLKEDRLRDLIEKRLTQKHQSTDVQSYLSDVKLMKNRDGESRRFAFIGFRDEEDAFDCVNYFNGTFVDTSKIEVSMAKSFADPRVPQPMREKRREALKRLREREELLLADKKDSQKKQKSDSNNDGGKKHDIDAEIAKNKQLQEFINTMKPSSQVTSWETVQSSKTQGEDEEAADDEVGEMSSNPLLSQALALKGNSRDADEDTDMFKLPGNESDDEYVSLNGGSNNANTDEPEPQMMSLDTFDTAGPTSTDDMAKDEAVSDLDWLKNRRVRIKDGADTPVSKQQQQPDTEQQQPEETEVETSQESEEEKSLKKIRETGRLFLRNILYTATEDDFRKLFSPYGELEEVHIAVDTRTGQSKGFAYVLFKNADNAATAFVELDKQIFQGRLLHILPADAKKSHKLDEFDLKNLPLKKQRELKRKANSAQQTFSWNSLYMNQDAVLSSVADKLGMKKSELIDAENSSSAVKQALAEASVIGDVRKFFETRGVDLTKFAQLKNSERDDRVILVKNFPYGTTREEIAELFLPFGKLQRLLLPPSGTIAILQFRDVPAARAAFSKISYKRFKDGIIYLEKGPSDCFTRDAQGDELVESETDIQKATAKEAKISGADLLEAQSLPAADKDDHDDDDDDDDVQAGPTVSIFIKNLNFSTTSQQLTEKFKPFNGFVVAQVKTKPDPKQPGKTLSMGFGFAEFKTKEQANAVISAMEGTILDGHKLQLKLSHRQGTSTTNASSKKKKKNQGKIIVKNLPFEATRKDVFELFSSFGQLKSVRVPKKFDKSARGFAFVEFLLPKEAENAMDQLQGVHLLGRRLVMEFVEQDPEDVEQQIEKMTRKVKKQVNTTKIANMRNSGKRKIDLDEDDENDGLQG</sequence>
<comment type="function">
    <text evidence="1">Involved in pre-rRNA processing.</text>
</comment>
<comment type="subcellular location">
    <subcellularLocation>
        <location evidence="1">Nucleus</location>
    </subcellularLocation>
</comment>
<comment type="similarity">
    <text evidence="4">Belongs to the RRM MRD1 family.</text>
</comment>
<accession>Q6CQR6</accession>
<name>MRD1_KLULA</name>